<evidence type="ECO:0000250" key="1"/>
<evidence type="ECO:0000255" key="2">
    <source>
        <dbReference type="PROSITE-ProRule" id="PRU00145"/>
    </source>
</evidence>
<evidence type="ECO:0000256" key="3">
    <source>
        <dbReference type="SAM" id="MobiDB-lite"/>
    </source>
</evidence>
<evidence type="ECO:0000305" key="4"/>
<keyword id="KW-0131">Cell cycle</keyword>
<keyword id="KW-0132">Cell division</keyword>
<keyword id="KW-1185">Reference proteome</keyword>
<sequence length="1446" mass="162081">MEAETTVDSLLKEIDMEMEMQSGNDVAQSNGYLLPLQEIGDETMDMLVQYNTENNANSNVNANANANANQWNKVDDPQDLLPMENNYDDDEEQGDESDTTNLLSGNKHLTEEESEQVLVDSKNLVLPPSSSKSNLINNLKQVVEDEVSDSQLSNDMDDTRTLNFSVKGTEPLLADELQDKEPDMIEVSTIYDGPDMISMADDSDTEDIDLLSKAKKPVSPSKIPITNAQTINYFKDAPVEDAKLQTVPDDIPLETKQTTVSNDILSNVETLLPPTLERPSFVISNLKEASQSVENLGFPDYEEDSQSEQETSVLHHTPTDFHAHEFEVFATELPDINVTPSIKPIDIDNNCEHENRLVSEEESKGVISSVPENENLPAVKSNPSSNSISDMLEIRQENKLDETLNMIDHQLSSNKSIDSVKTVSDNNISKSANDGSVEDVADSGKETSDIARNIEESHNSLINLTSGNNFDQSMHNDLIEESNTRVNVTESDITASEDSFNGSHDQNSSLNNLTKNDNGIQQNLEDNHTGIQPEMVVPEEVTTTLPEVNILPASENMLENTSESEISVQFLQNRDNEDKVSSDPQLEENIRSTETVMNTQETFEPKPAKKNQYTDREIEVLNSQKDISEATDNSAVNSRISSSASNFTPVLPPLPKLEKLSIDDPFDDEFETSNESMQMKNSVKPTDYLSIWHLQEQTTKAVSPALSSNSQFSYNSNSTKSSVASPVPATAFKFKPKIVSRSKYYYPDNNIQQEQSMDFIYTKLPSILDPMRRNTINSKKIRQTVIDKRKSHPSFSVDEGNTITEVNIEPEVKVQPISIENDSSSLKANNQDDNESCSSGSQAFVTPSATMDNFDSQFNELGTSFENDLENVLNYFDKDINTNTSSDLIEETTTKNQALPTSKVWSESVDYSLPTGEEPNVDHNIMKKLLNTENSELNECRSDQEHHIIDNAGLGIWRSTANDIATGNVDMFALNGRDISISKSEMTNDIDMGIFSDKKSLVHTPELSPVKSTHVGSPFKVISPKKNTQKDLKDGTTAEKRVSSESEAAQISIMSAVGEITNKDTAVVDDASNKDNIDAGQVGNEGEPIVDKGLLYLHLQGTTKLSLAGINAHHPKYSIEFDNGKNVVRTDWTELDSRGTISLNKEFEIPIDQSINKLIITLMIKYTRLTNELVEVTKRIPIGKKFPFGKMKYRTETQFVERSTVKDEWDYLFARDGSFGRCEILLDESLFEKIRFKEQDLSFDLLNKWSRLQNNSSSKVTQEALYDLPRRPAYKVGSLKVKGCFLERVSNDEKFPVSLKKAKSIVEKYRSQQDITKEGYLLQEGGDLSSQMKNRFFKLNGVELVGYHEVSMKPKIRINMLKVVKVIGKDDVVTGKDNVRNFTTWVLMNDCFQLVFDDGEVITFSDESSLADEQSWYMKLKEVVELNAFHQPWVKRFSENMIINDI</sequence>
<feature type="chain" id="PRO_0000330079" description="Bud site selection protein 4">
    <location>
        <begin position="1"/>
        <end position="1446"/>
    </location>
</feature>
<feature type="domain" description="PH" evidence="2">
    <location>
        <begin position="1314"/>
        <end position="1425"/>
    </location>
</feature>
<feature type="region of interest" description="Disordered" evidence="3">
    <location>
        <begin position="69"/>
        <end position="103"/>
    </location>
</feature>
<feature type="region of interest" description="Disordered" evidence="3">
    <location>
        <begin position="358"/>
        <end position="385"/>
    </location>
</feature>
<feature type="region of interest" description="Disordered" evidence="3">
    <location>
        <begin position="425"/>
        <end position="446"/>
    </location>
</feature>
<feature type="region of interest" description="Disordered" evidence="3">
    <location>
        <begin position="495"/>
        <end position="525"/>
    </location>
</feature>
<feature type="region of interest" description="Disordered" evidence="3">
    <location>
        <begin position="823"/>
        <end position="844"/>
    </location>
</feature>
<feature type="region of interest" description="Disordered" evidence="3">
    <location>
        <begin position="1025"/>
        <end position="1044"/>
    </location>
</feature>
<feature type="compositionally biased region" description="Acidic residues" evidence="3">
    <location>
        <begin position="86"/>
        <end position="98"/>
    </location>
</feature>
<feature type="compositionally biased region" description="Polar residues" evidence="3">
    <location>
        <begin position="425"/>
        <end position="434"/>
    </location>
</feature>
<feature type="compositionally biased region" description="Polar residues" evidence="3">
    <location>
        <begin position="495"/>
        <end position="524"/>
    </location>
</feature>
<feature type="compositionally biased region" description="Basic and acidic residues" evidence="3">
    <location>
        <begin position="1028"/>
        <end position="1044"/>
    </location>
</feature>
<reference key="1">
    <citation type="journal article" date="2004" name="Nature">
        <title>Genome evolution in yeasts.</title>
        <authorList>
            <person name="Dujon B."/>
            <person name="Sherman D."/>
            <person name="Fischer G."/>
            <person name="Durrens P."/>
            <person name="Casaregola S."/>
            <person name="Lafontaine I."/>
            <person name="de Montigny J."/>
            <person name="Marck C."/>
            <person name="Neuveglise C."/>
            <person name="Talla E."/>
            <person name="Goffard N."/>
            <person name="Frangeul L."/>
            <person name="Aigle M."/>
            <person name="Anthouard V."/>
            <person name="Babour A."/>
            <person name="Barbe V."/>
            <person name="Barnay S."/>
            <person name="Blanchin S."/>
            <person name="Beckerich J.-M."/>
            <person name="Beyne E."/>
            <person name="Bleykasten C."/>
            <person name="Boisrame A."/>
            <person name="Boyer J."/>
            <person name="Cattolico L."/>
            <person name="Confanioleri F."/>
            <person name="de Daruvar A."/>
            <person name="Despons L."/>
            <person name="Fabre E."/>
            <person name="Fairhead C."/>
            <person name="Ferry-Dumazet H."/>
            <person name="Groppi A."/>
            <person name="Hantraye F."/>
            <person name="Hennequin C."/>
            <person name="Jauniaux N."/>
            <person name="Joyet P."/>
            <person name="Kachouri R."/>
            <person name="Kerrest A."/>
            <person name="Koszul R."/>
            <person name="Lemaire M."/>
            <person name="Lesur I."/>
            <person name="Ma L."/>
            <person name="Muller H."/>
            <person name="Nicaud J.-M."/>
            <person name="Nikolski M."/>
            <person name="Oztas S."/>
            <person name="Ozier-Kalogeropoulos O."/>
            <person name="Pellenz S."/>
            <person name="Potier S."/>
            <person name="Richard G.-F."/>
            <person name="Straub M.-L."/>
            <person name="Suleau A."/>
            <person name="Swennen D."/>
            <person name="Tekaia F."/>
            <person name="Wesolowski-Louvel M."/>
            <person name="Westhof E."/>
            <person name="Wirth B."/>
            <person name="Zeniou-Meyer M."/>
            <person name="Zivanovic Y."/>
            <person name="Bolotin-Fukuhara M."/>
            <person name="Thierry A."/>
            <person name="Bouchier C."/>
            <person name="Caudron B."/>
            <person name="Scarpelli C."/>
            <person name="Gaillardin C."/>
            <person name="Weissenbach J."/>
            <person name="Wincker P."/>
            <person name="Souciet J.-L."/>
        </authorList>
    </citation>
    <scope>NUCLEOTIDE SEQUENCE [LARGE SCALE GENOMIC DNA]</scope>
    <source>
        <strain>ATCC 2001 / BCRC 20586 / JCM 3761 / NBRC 0622 / NRRL Y-65 / CBS 138</strain>
    </source>
</reference>
<name>BUD4_CANGA</name>
<gene>
    <name type="primary">BUD4</name>
    <name type="ordered locus">CAGL0M09086g</name>
</gene>
<organism>
    <name type="scientific">Candida glabrata (strain ATCC 2001 / BCRC 20586 / JCM 3761 / NBRC 0622 / NRRL Y-65 / CBS 138)</name>
    <name type="common">Yeast</name>
    <name type="synonym">Nakaseomyces glabratus</name>
    <dbReference type="NCBI Taxonomy" id="284593"/>
    <lineage>
        <taxon>Eukaryota</taxon>
        <taxon>Fungi</taxon>
        <taxon>Dikarya</taxon>
        <taxon>Ascomycota</taxon>
        <taxon>Saccharomycotina</taxon>
        <taxon>Saccharomycetes</taxon>
        <taxon>Saccharomycetales</taxon>
        <taxon>Saccharomycetaceae</taxon>
        <taxon>Nakaseomyces</taxon>
    </lineage>
</organism>
<protein>
    <recommendedName>
        <fullName>Bud site selection protein 4</fullName>
    </recommendedName>
</protein>
<proteinExistence type="inferred from homology"/>
<comment type="function">
    <text evidence="1">Required for selection of future bud sites. Cooperates with other bud site selection proteins to recognize a spatial landmark during mitosis and they subsequently become a landmark for downstream polarity establishment factors that coordinate budding and cytokinesis. Involved in the septin organization at the bud neck (By similarity).</text>
</comment>
<comment type="subcellular location">
    <subcellularLocation>
        <location>Bud neck</location>
    </subcellularLocation>
    <text evidence="1">Localizes to two distinct rings on either side of the mother-bud neck.</text>
</comment>
<comment type="similarity">
    <text evidence="4">Belongs to the BUD4 family.</text>
</comment>
<dbReference type="EMBL" id="CR380959">
    <property type="protein sequence ID" value="CAG62716.1"/>
    <property type="molecule type" value="Genomic_DNA"/>
</dbReference>
<dbReference type="RefSeq" id="XP_449740.1">
    <property type="nucleotide sequence ID" value="XM_449740.1"/>
</dbReference>
<dbReference type="FunCoup" id="Q6FJ54">
    <property type="interactions" value="199"/>
</dbReference>
<dbReference type="STRING" id="284593.Q6FJ54"/>
<dbReference type="EnsemblFungi" id="CAGL0M09086g-T">
    <property type="protein sequence ID" value="CAGL0M09086g-T-p1"/>
    <property type="gene ID" value="CAGL0M09086g"/>
</dbReference>
<dbReference type="KEGG" id="cgr:2891302"/>
<dbReference type="CGD" id="CAL0136477">
    <property type="gene designation" value="CAGL0M09086g"/>
</dbReference>
<dbReference type="VEuPathDB" id="FungiDB:CAGL0M09086g"/>
<dbReference type="eggNOG" id="ENOG502REBM">
    <property type="taxonomic scope" value="Eukaryota"/>
</dbReference>
<dbReference type="HOGENOM" id="CLU_004727_0_0_1"/>
<dbReference type="InParanoid" id="Q6FJ54"/>
<dbReference type="OMA" id="MLVKHNT"/>
<dbReference type="Proteomes" id="UP000002428">
    <property type="component" value="Chromosome M"/>
</dbReference>
<dbReference type="GO" id="GO:0000142">
    <property type="term" value="C:cellular bud neck contractile ring"/>
    <property type="evidence" value="ECO:0007669"/>
    <property type="project" value="TreeGrafter"/>
</dbReference>
<dbReference type="GO" id="GO:0005525">
    <property type="term" value="F:GTP binding"/>
    <property type="evidence" value="ECO:0007669"/>
    <property type="project" value="TreeGrafter"/>
</dbReference>
<dbReference type="GO" id="GO:0007120">
    <property type="term" value="P:axial cellular bud site selection"/>
    <property type="evidence" value="ECO:0007669"/>
    <property type="project" value="TreeGrafter"/>
</dbReference>
<dbReference type="GO" id="GO:0097271">
    <property type="term" value="P:protein localization to bud neck"/>
    <property type="evidence" value="ECO:0007669"/>
    <property type="project" value="TreeGrafter"/>
</dbReference>
<dbReference type="CDD" id="cd13278">
    <property type="entry name" value="PH_Bud4"/>
    <property type="match status" value="1"/>
</dbReference>
<dbReference type="Gene3D" id="2.30.29.30">
    <property type="entry name" value="Pleckstrin-homology domain (PH domain)/Phosphotyrosine-binding domain (PTB)"/>
    <property type="match status" value="1"/>
</dbReference>
<dbReference type="InterPro" id="IPR052007">
    <property type="entry name" value="Bud4"/>
</dbReference>
<dbReference type="InterPro" id="IPR011993">
    <property type="entry name" value="PH-like_dom_sf"/>
</dbReference>
<dbReference type="InterPro" id="IPR001849">
    <property type="entry name" value="PH_domain"/>
</dbReference>
<dbReference type="PANTHER" id="PTHR36100">
    <property type="entry name" value="BUD SITE SELECTION PROTEIN 4"/>
    <property type="match status" value="1"/>
</dbReference>
<dbReference type="PANTHER" id="PTHR36100:SF1">
    <property type="entry name" value="BUD SITE SELECTION PROTEIN 4"/>
    <property type="match status" value="1"/>
</dbReference>
<dbReference type="SMART" id="SM00233">
    <property type="entry name" value="PH"/>
    <property type="match status" value="1"/>
</dbReference>
<dbReference type="SUPFAM" id="SSF50729">
    <property type="entry name" value="PH domain-like"/>
    <property type="match status" value="1"/>
</dbReference>
<dbReference type="PROSITE" id="PS50003">
    <property type="entry name" value="PH_DOMAIN"/>
    <property type="match status" value="1"/>
</dbReference>
<accession>Q6FJ54</accession>